<evidence type="ECO:0000255" key="1">
    <source>
        <dbReference type="PROSITE-ProRule" id="PRU00108"/>
    </source>
</evidence>
<evidence type="ECO:0000305" key="2"/>
<gene>
    <name type="primary">HBX3</name>
</gene>
<name>HBX3_ECHGR</name>
<sequence>RIHPCPVNKCKCSRAPGRSLSYSKRIINEIRQNPSKCQIFFYQTSPPPSLAPYPLQRLRPYPSSMNPRDLEMVVVTNFQSQSKRRVLFNKFQISQLEKRLKQRYLTAQERQELAHTIGLTPTQVKIWFQNHAYKMKRLFHDDHVEASVHKWPIKSAHLQPKVSTRVV</sequence>
<keyword id="KW-0217">Developmental protein</keyword>
<keyword id="KW-0238">DNA-binding</keyword>
<keyword id="KW-0371">Homeobox</keyword>
<keyword id="KW-0539">Nucleus</keyword>
<comment type="subcellular location">
    <subcellularLocation>
        <location evidence="2">Nucleus</location>
    </subcellularLocation>
</comment>
<comment type="similarity">
    <text evidence="2">Belongs to the NK-2 homeobox family.</text>
</comment>
<feature type="chain" id="PRO_0000048907" description="Homeobox protein EgHBX3">
    <location>
        <begin position="1" status="less than"/>
        <end position="167"/>
    </location>
</feature>
<feature type="DNA-binding region" description="Homeobox" evidence="1">
    <location>
        <begin position="80"/>
        <end position="139"/>
    </location>
</feature>
<feature type="non-terminal residue">
    <location>
        <position position="1"/>
    </location>
</feature>
<accession>P42585</accession>
<proteinExistence type="inferred from homology"/>
<protein>
    <recommendedName>
        <fullName>Homeobox protein EgHBX3</fullName>
    </recommendedName>
</protein>
<reference key="1">
    <citation type="submission" date="1996-09" db="EMBL/GenBank/DDBJ databases">
        <authorList>
            <person name="Martinez C."/>
        </authorList>
    </citation>
    <scope>NUCLEOTIDE SEQUENCE [GENOMIC DNA]</scope>
    <scope>SEQUENCE REVISION</scope>
</reference>
<reference key="2">
    <citation type="journal article" date="1992" name="Gene">
        <title>Homeoboxes in flatworms.</title>
        <authorList>
            <person name="Oliver G."/>
            <person name="Vispo M."/>
            <person name="Maihlos A."/>
            <person name="Martinez C."/>
            <person name="Sosa-Pineda B."/>
            <person name="Fielitz W."/>
            <person name="Ehrlich R."/>
        </authorList>
    </citation>
    <scope>NUCLEOTIDE SEQUENCE [GENOMIC DNA] OF 81-139</scope>
</reference>
<organism>
    <name type="scientific">Echinococcus granulosus</name>
    <name type="common">Hydatid tapeworm</name>
    <dbReference type="NCBI Taxonomy" id="6210"/>
    <lineage>
        <taxon>Eukaryota</taxon>
        <taxon>Metazoa</taxon>
        <taxon>Spiralia</taxon>
        <taxon>Lophotrochozoa</taxon>
        <taxon>Platyhelminthes</taxon>
        <taxon>Cestoda</taxon>
        <taxon>Eucestoda</taxon>
        <taxon>Cyclophyllidea</taxon>
        <taxon>Taeniidae</taxon>
        <taxon>Echinococcus</taxon>
        <taxon>Echinococcus granulosus group</taxon>
    </lineage>
</organism>
<dbReference type="EMBL" id="X66819">
    <property type="protein sequence ID" value="CAA47297.1"/>
    <property type="molecule type" value="Genomic_DNA"/>
</dbReference>
<dbReference type="PIR" id="JC1388">
    <property type="entry name" value="JC1388"/>
</dbReference>
<dbReference type="SMR" id="P42585"/>
<dbReference type="OrthoDB" id="3137333at2759"/>
<dbReference type="Proteomes" id="UP000492820">
    <property type="component" value="Unplaced"/>
</dbReference>
<dbReference type="GO" id="GO:0005634">
    <property type="term" value="C:nucleus"/>
    <property type="evidence" value="ECO:0007669"/>
    <property type="project" value="UniProtKB-SubCell"/>
</dbReference>
<dbReference type="GO" id="GO:0000981">
    <property type="term" value="F:DNA-binding transcription factor activity, RNA polymerase II-specific"/>
    <property type="evidence" value="ECO:0007669"/>
    <property type="project" value="InterPro"/>
</dbReference>
<dbReference type="GO" id="GO:0000978">
    <property type="term" value="F:RNA polymerase II cis-regulatory region sequence-specific DNA binding"/>
    <property type="evidence" value="ECO:0007669"/>
    <property type="project" value="TreeGrafter"/>
</dbReference>
<dbReference type="GO" id="GO:0030154">
    <property type="term" value="P:cell differentiation"/>
    <property type="evidence" value="ECO:0007669"/>
    <property type="project" value="TreeGrafter"/>
</dbReference>
<dbReference type="CDD" id="cd00086">
    <property type="entry name" value="homeodomain"/>
    <property type="match status" value="1"/>
</dbReference>
<dbReference type="Gene3D" id="1.10.10.60">
    <property type="entry name" value="Homeodomain-like"/>
    <property type="match status" value="1"/>
</dbReference>
<dbReference type="InterPro" id="IPR001356">
    <property type="entry name" value="HD"/>
</dbReference>
<dbReference type="InterPro" id="IPR020479">
    <property type="entry name" value="HD_metazoa"/>
</dbReference>
<dbReference type="InterPro" id="IPR017970">
    <property type="entry name" value="Homeobox_CS"/>
</dbReference>
<dbReference type="InterPro" id="IPR050394">
    <property type="entry name" value="Homeobox_NK-like"/>
</dbReference>
<dbReference type="InterPro" id="IPR009057">
    <property type="entry name" value="Homeodomain-like_sf"/>
</dbReference>
<dbReference type="InterPro" id="IPR000047">
    <property type="entry name" value="HTH_motif"/>
</dbReference>
<dbReference type="PANTHER" id="PTHR24340">
    <property type="entry name" value="HOMEOBOX PROTEIN NKX"/>
    <property type="match status" value="1"/>
</dbReference>
<dbReference type="Pfam" id="PF00046">
    <property type="entry name" value="Homeodomain"/>
    <property type="match status" value="1"/>
</dbReference>
<dbReference type="PRINTS" id="PR00024">
    <property type="entry name" value="HOMEOBOX"/>
</dbReference>
<dbReference type="PRINTS" id="PR00031">
    <property type="entry name" value="HTHREPRESSR"/>
</dbReference>
<dbReference type="SMART" id="SM00389">
    <property type="entry name" value="HOX"/>
    <property type="match status" value="1"/>
</dbReference>
<dbReference type="SUPFAM" id="SSF46689">
    <property type="entry name" value="Homeodomain-like"/>
    <property type="match status" value="1"/>
</dbReference>
<dbReference type="PROSITE" id="PS00027">
    <property type="entry name" value="HOMEOBOX_1"/>
    <property type="match status" value="1"/>
</dbReference>
<dbReference type="PROSITE" id="PS50071">
    <property type="entry name" value="HOMEOBOX_2"/>
    <property type="match status" value="1"/>
</dbReference>